<protein>
    <recommendedName>
        <fullName evidence="1">Cytidylate kinase</fullName>
        <shortName evidence="1">CK</shortName>
        <ecNumber evidence="1">2.7.4.25</ecNumber>
    </recommendedName>
    <alternativeName>
        <fullName evidence="1">Cytidine monophosphate kinase</fullName>
        <shortName evidence="1">CMP kinase</shortName>
    </alternativeName>
</protein>
<organism>
    <name type="scientific">Streptococcus pyogenes serotype M1</name>
    <dbReference type="NCBI Taxonomy" id="301447"/>
    <lineage>
        <taxon>Bacteria</taxon>
        <taxon>Bacillati</taxon>
        <taxon>Bacillota</taxon>
        <taxon>Bacilli</taxon>
        <taxon>Lactobacillales</taxon>
        <taxon>Streptococcaceae</taxon>
        <taxon>Streptococcus</taxon>
    </lineage>
</organism>
<accession>Q9A0F0</accession>
<accession>Q48ZI2</accession>
<feature type="chain" id="PRO_0000131987" description="Cytidylate kinase">
    <location>
        <begin position="1"/>
        <end position="226"/>
    </location>
</feature>
<feature type="binding site" evidence="1">
    <location>
        <begin position="10"/>
        <end position="18"/>
    </location>
    <ligand>
        <name>ATP</name>
        <dbReference type="ChEBI" id="CHEBI:30616"/>
    </ligand>
</feature>
<dbReference type="EC" id="2.7.4.25" evidence="1"/>
<dbReference type="EMBL" id="AE004092">
    <property type="protein sequence ID" value="AAK33740.1"/>
    <property type="molecule type" value="Genomic_DNA"/>
</dbReference>
<dbReference type="EMBL" id="CP000017">
    <property type="protein sequence ID" value="AAZ51236.1"/>
    <property type="molecule type" value="Genomic_DNA"/>
</dbReference>
<dbReference type="RefSeq" id="NP_269019.1">
    <property type="nucleotide sequence ID" value="NC_002737.2"/>
</dbReference>
<dbReference type="SMR" id="Q9A0F0"/>
<dbReference type="PaxDb" id="1314-HKU360_00628"/>
<dbReference type="KEGG" id="spy:SPy_0803"/>
<dbReference type="KEGG" id="spz:M5005_Spy0618"/>
<dbReference type="PATRIC" id="fig|160490.10.peg.686"/>
<dbReference type="HOGENOM" id="CLU_079959_0_2_9"/>
<dbReference type="OMA" id="RAITWWM"/>
<dbReference type="Proteomes" id="UP000000750">
    <property type="component" value="Chromosome"/>
</dbReference>
<dbReference type="GO" id="GO:0005829">
    <property type="term" value="C:cytosol"/>
    <property type="evidence" value="ECO:0007669"/>
    <property type="project" value="TreeGrafter"/>
</dbReference>
<dbReference type="GO" id="GO:0005524">
    <property type="term" value="F:ATP binding"/>
    <property type="evidence" value="ECO:0007669"/>
    <property type="project" value="UniProtKB-UniRule"/>
</dbReference>
<dbReference type="GO" id="GO:0036430">
    <property type="term" value="F:CMP kinase activity"/>
    <property type="evidence" value="ECO:0007669"/>
    <property type="project" value="RHEA"/>
</dbReference>
<dbReference type="GO" id="GO:0036431">
    <property type="term" value="F:dCMP kinase activity"/>
    <property type="evidence" value="ECO:0007669"/>
    <property type="project" value="RHEA"/>
</dbReference>
<dbReference type="GO" id="GO:0015949">
    <property type="term" value="P:nucleobase-containing small molecule interconversion"/>
    <property type="evidence" value="ECO:0007669"/>
    <property type="project" value="TreeGrafter"/>
</dbReference>
<dbReference type="GO" id="GO:0006220">
    <property type="term" value="P:pyrimidine nucleotide metabolic process"/>
    <property type="evidence" value="ECO:0007669"/>
    <property type="project" value="UniProtKB-UniRule"/>
</dbReference>
<dbReference type="CDD" id="cd02020">
    <property type="entry name" value="CMPK"/>
    <property type="match status" value="1"/>
</dbReference>
<dbReference type="FunFam" id="3.40.50.300:FF:000484">
    <property type="entry name" value="Cytidylate kinase"/>
    <property type="match status" value="1"/>
</dbReference>
<dbReference type="Gene3D" id="3.40.50.300">
    <property type="entry name" value="P-loop containing nucleotide triphosphate hydrolases"/>
    <property type="match status" value="1"/>
</dbReference>
<dbReference type="HAMAP" id="MF_00238">
    <property type="entry name" value="Cytidyl_kinase_type1"/>
    <property type="match status" value="1"/>
</dbReference>
<dbReference type="InterPro" id="IPR003136">
    <property type="entry name" value="Cytidylate_kin"/>
</dbReference>
<dbReference type="InterPro" id="IPR011994">
    <property type="entry name" value="Cytidylate_kinase_dom"/>
</dbReference>
<dbReference type="InterPro" id="IPR027417">
    <property type="entry name" value="P-loop_NTPase"/>
</dbReference>
<dbReference type="NCBIfam" id="TIGR00017">
    <property type="entry name" value="cmk"/>
    <property type="match status" value="1"/>
</dbReference>
<dbReference type="PANTHER" id="PTHR21299:SF2">
    <property type="entry name" value="CYTIDYLATE KINASE"/>
    <property type="match status" value="1"/>
</dbReference>
<dbReference type="PANTHER" id="PTHR21299">
    <property type="entry name" value="CYTIDYLATE KINASE/PANTOATE-BETA-ALANINE LIGASE"/>
    <property type="match status" value="1"/>
</dbReference>
<dbReference type="Pfam" id="PF02224">
    <property type="entry name" value="Cytidylate_kin"/>
    <property type="match status" value="1"/>
</dbReference>
<dbReference type="SUPFAM" id="SSF52540">
    <property type="entry name" value="P-loop containing nucleoside triphosphate hydrolases"/>
    <property type="match status" value="1"/>
</dbReference>
<sequence length="226" mass="25035">MKAIKIAIDGPASSGKSTVAKIIAKNLGYTYLDTGAMYRSATYIALTHGYTGKEVALILEELEKNPIFFKKAKDGSQLVFLGDEDVTLAIRQNDVTNNVSWISALPEIREELVHQQRRIAQAGGIIMDGRDIGTVVLPDAELKIFLVASVEERAERRYKENLEKGIESDFETLKEEIAARDYKDSHRKVSPLKAAEDALIFDTTGVSIDGVVQFIQEKAEKIVDMS</sequence>
<reference key="1">
    <citation type="journal article" date="2001" name="Proc. Natl. Acad. Sci. U.S.A.">
        <title>Complete genome sequence of an M1 strain of Streptococcus pyogenes.</title>
        <authorList>
            <person name="Ferretti J.J."/>
            <person name="McShan W.M."/>
            <person name="Ajdic D.J."/>
            <person name="Savic D.J."/>
            <person name="Savic G."/>
            <person name="Lyon K."/>
            <person name="Primeaux C."/>
            <person name="Sezate S."/>
            <person name="Suvorov A.N."/>
            <person name="Kenton S."/>
            <person name="Lai H.S."/>
            <person name="Lin S.P."/>
            <person name="Qian Y."/>
            <person name="Jia H.G."/>
            <person name="Najar F.Z."/>
            <person name="Ren Q."/>
            <person name="Zhu H."/>
            <person name="Song L."/>
            <person name="White J."/>
            <person name="Yuan X."/>
            <person name="Clifton S.W."/>
            <person name="Roe B.A."/>
            <person name="McLaughlin R.E."/>
        </authorList>
    </citation>
    <scope>NUCLEOTIDE SEQUENCE [LARGE SCALE GENOMIC DNA]</scope>
    <source>
        <strain>ATCC 700294 / SF370 / Serotype M1</strain>
    </source>
</reference>
<reference key="2">
    <citation type="journal article" date="2005" name="J. Infect. Dis.">
        <title>Evolutionary origin and emergence of a highly successful clone of serotype M1 group A Streptococcus involved multiple horizontal gene transfer events.</title>
        <authorList>
            <person name="Sumby P."/>
            <person name="Porcella S.F."/>
            <person name="Madrigal A.G."/>
            <person name="Barbian K.D."/>
            <person name="Virtaneva K."/>
            <person name="Ricklefs S.M."/>
            <person name="Sturdevant D.E."/>
            <person name="Graham M.R."/>
            <person name="Vuopio-Varkila J."/>
            <person name="Hoe N.P."/>
            <person name="Musser J.M."/>
        </authorList>
    </citation>
    <scope>NUCLEOTIDE SEQUENCE [LARGE SCALE GENOMIC DNA]</scope>
    <source>
        <strain>ATCC BAA-947 / MGAS5005 / Serotype M1</strain>
    </source>
</reference>
<comment type="catalytic activity">
    <reaction evidence="1">
        <text>CMP + ATP = CDP + ADP</text>
        <dbReference type="Rhea" id="RHEA:11600"/>
        <dbReference type="ChEBI" id="CHEBI:30616"/>
        <dbReference type="ChEBI" id="CHEBI:58069"/>
        <dbReference type="ChEBI" id="CHEBI:60377"/>
        <dbReference type="ChEBI" id="CHEBI:456216"/>
        <dbReference type="EC" id="2.7.4.25"/>
    </reaction>
</comment>
<comment type="catalytic activity">
    <reaction evidence="1">
        <text>dCMP + ATP = dCDP + ADP</text>
        <dbReference type="Rhea" id="RHEA:25094"/>
        <dbReference type="ChEBI" id="CHEBI:30616"/>
        <dbReference type="ChEBI" id="CHEBI:57566"/>
        <dbReference type="ChEBI" id="CHEBI:58593"/>
        <dbReference type="ChEBI" id="CHEBI:456216"/>
        <dbReference type="EC" id="2.7.4.25"/>
    </reaction>
</comment>
<comment type="subcellular location">
    <subcellularLocation>
        <location evidence="1">Cytoplasm</location>
    </subcellularLocation>
</comment>
<comment type="similarity">
    <text evidence="1">Belongs to the cytidylate kinase family. Type 1 subfamily.</text>
</comment>
<evidence type="ECO:0000255" key="1">
    <source>
        <dbReference type="HAMAP-Rule" id="MF_00238"/>
    </source>
</evidence>
<gene>
    <name evidence="1" type="primary">cmk</name>
    <name type="ordered locus">SPy_0803</name>
    <name type="ordered locus">M5005_Spy0618</name>
</gene>
<name>KCY_STRP1</name>
<proteinExistence type="inferred from homology"/>
<keyword id="KW-0067">ATP-binding</keyword>
<keyword id="KW-0963">Cytoplasm</keyword>
<keyword id="KW-0418">Kinase</keyword>
<keyword id="KW-0547">Nucleotide-binding</keyword>
<keyword id="KW-1185">Reference proteome</keyword>
<keyword id="KW-0808">Transferase</keyword>